<accession>Q54TN3</accession>
<dbReference type="EC" id="3.1.1.89"/>
<dbReference type="EMBL" id="AAFI02000042">
    <property type="protein sequence ID" value="EAL66587.1"/>
    <property type="molecule type" value="Genomic_DNA"/>
</dbReference>
<dbReference type="RefSeq" id="XP_640558.1">
    <property type="nucleotide sequence ID" value="XM_635466.1"/>
</dbReference>
<dbReference type="SMR" id="Q54TN3"/>
<dbReference type="FunCoup" id="Q54TN3">
    <property type="interactions" value="517"/>
</dbReference>
<dbReference type="STRING" id="44689.Q54TN3"/>
<dbReference type="ESTHER" id="dicdi-ppme1">
    <property type="family name" value="PPase_methylesterase_euk"/>
</dbReference>
<dbReference type="PaxDb" id="44689-DDB0305014"/>
<dbReference type="EnsemblProtists" id="EAL66587">
    <property type="protein sequence ID" value="EAL66587"/>
    <property type="gene ID" value="DDB_G0281651"/>
</dbReference>
<dbReference type="GeneID" id="8623168"/>
<dbReference type="KEGG" id="ddi:DDB_G0281651"/>
<dbReference type="dictyBase" id="DDB_G0281651">
    <property type="gene designation" value="ppme1"/>
</dbReference>
<dbReference type="VEuPathDB" id="AmoebaDB:DDB_G0281651"/>
<dbReference type="eggNOG" id="KOG2564">
    <property type="taxonomic scope" value="Eukaryota"/>
</dbReference>
<dbReference type="HOGENOM" id="CLU_024818_0_1_1"/>
<dbReference type="InParanoid" id="Q54TN3"/>
<dbReference type="OMA" id="VMVCHHG"/>
<dbReference type="PhylomeDB" id="Q54TN3"/>
<dbReference type="Reactome" id="R-DDI-69273">
    <property type="pathway name" value="Cyclin A/B1/B2 associated events during G2/M transition"/>
</dbReference>
<dbReference type="PRO" id="PR:Q54TN3"/>
<dbReference type="Proteomes" id="UP000002195">
    <property type="component" value="Chromosome 3"/>
</dbReference>
<dbReference type="GO" id="GO:0051722">
    <property type="term" value="F:protein C-terminal methylesterase activity"/>
    <property type="evidence" value="ECO:0000250"/>
    <property type="project" value="UniProtKB"/>
</dbReference>
<dbReference type="GO" id="GO:0051721">
    <property type="term" value="F:protein phosphatase 2A binding"/>
    <property type="evidence" value="ECO:0000250"/>
    <property type="project" value="UniProtKB"/>
</dbReference>
<dbReference type="GO" id="GO:0006482">
    <property type="term" value="P:protein demethylation"/>
    <property type="evidence" value="ECO:0000250"/>
    <property type="project" value="dictyBase"/>
</dbReference>
<dbReference type="FunFam" id="3.40.50.1820:FF:000738">
    <property type="entry name" value="Probable protein phosphatase methylesterase 1"/>
    <property type="match status" value="1"/>
</dbReference>
<dbReference type="Gene3D" id="3.40.50.1820">
    <property type="entry name" value="alpha/beta hydrolase"/>
    <property type="match status" value="1"/>
</dbReference>
<dbReference type="InterPro" id="IPR000073">
    <property type="entry name" value="AB_hydrolase_1"/>
</dbReference>
<dbReference type="InterPro" id="IPR029058">
    <property type="entry name" value="AB_hydrolase_fold"/>
</dbReference>
<dbReference type="InterPro" id="IPR016812">
    <property type="entry name" value="PPase_methylesterase_euk"/>
</dbReference>
<dbReference type="PANTHER" id="PTHR14189:SF0">
    <property type="entry name" value="PROTEIN PHOSPHATASE METHYLESTERASE 1"/>
    <property type="match status" value="1"/>
</dbReference>
<dbReference type="PANTHER" id="PTHR14189">
    <property type="entry name" value="PROTEIN PHOSPHATASE METHYLESTERASE-1 RELATED"/>
    <property type="match status" value="1"/>
</dbReference>
<dbReference type="Pfam" id="PF12697">
    <property type="entry name" value="Abhydrolase_6"/>
    <property type="match status" value="1"/>
</dbReference>
<dbReference type="PIRSF" id="PIRSF022950">
    <property type="entry name" value="PPase_methylesterase_euk"/>
    <property type="match status" value="1"/>
</dbReference>
<dbReference type="SUPFAM" id="SSF53474">
    <property type="entry name" value="alpha/beta-Hydrolases"/>
    <property type="match status" value="1"/>
</dbReference>
<dbReference type="PROSITE" id="PS00120">
    <property type="entry name" value="LIPASE_SER"/>
    <property type="match status" value="1"/>
</dbReference>
<name>PPME1_DICDI</name>
<gene>
    <name type="primary">ppme1</name>
    <name type="ORF">DDB_G0281651</name>
</gene>
<comment type="function">
    <text evidence="1">Demethylates proteins that have been reversibly carboxymethylated.</text>
</comment>
<comment type="catalytic activity">
    <reaction>
        <text>[phosphatase 2A protein]-C-terminal L-leucine methyl ester + H2O = [phosphatase 2A protein]-C-terminal L-leucine + methanol + H(+)</text>
        <dbReference type="Rhea" id="RHEA:48548"/>
        <dbReference type="Rhea" id="RHEA-COMP:12134"/>
        <dbReference type="Rhea" id="RHEA-COMP:12135"/>
        <dbReference type="ChEBI" id="CHEBI:15377"/>
        <dbReference type="ChEBI" id="CHEBI:15378"/>
        <dbReference type="ChEBI" id="CHEBI:17790"/>
        <dbReference type="ChEBI" id="CHEBI:90516"/>
        <dbReference type="ChEBI" id="CHEBI:90517"/>
        <dbReference type="EC" id="3.1.1.89"/>
    </reaction>
</comment>
<comment type="similarity">
    <text evidence="2">Belongs to the AB hydrolase superfamily.</text>
</comment>
<keyword id="KW-0378">Hydrolase</keyword>
<keyword id="KW-1185">Reference proteome</keyword>
<keyword id="KW-0719">Serine esterase</keyword>
<sequence length="321" mass="36005">MFRGIYKGSLPPIDPSSIHHGESLADQLQDKDYYSVGWNQYFDQSRDIKLPGTENTFRIYESNVDVVDNGYLFVFLHGGGYTSLSWSLVVDKIKKKNLEKKVRMMCYDCRGHGETKTSDDSNLSIETMVDDCANLINYYQDIIYKNEGGGGGNDDDDQKERLKVIIVGHSMGGSVVIKTSSTNRINNLFGLIVIDVVEGTALLALSSMKSILAKRPKSFDSVKDAIKWSISSNTVKNIESARVSLYFINNFFFFFLTDWFSGLSKEFLSSMALKLLILAGTDRLDRELTIAQMQGKFQLILLPLCGHVIQEDVPTGPKINI</sequence>
<evidence type="ECO:0000250" key="1"/>
<evidence type="ECO:0000305" key="2"/>
<protein>
    <recommendedName>
        <fullName>Probable protein phosphatase methylesterase 1</fullName>
        <shortName>PME-1</shortName>
        <ecNumber>3.1.1.89</ecNumber>
    </recommendedName>
</protein>
<reference key="1">
    <citation type="journal article" date="2005" name="Nature">
        <title>The genome of the social amoeba Dictyostelium discoideum.</title>
        <authorList>
            <person name="Eichinger L."/>
            <person name="Pachebat J.A."/>
            <person name="Gloeckner G."/>
            <person name="Rajandream M.A."/>
            <person name="Sucgang R."/>
            <person name="Berriman M."/>
            <person name="Song J."/>
            <person name="Olsen R."/>
            <person name="Szafranski K."/>
            <person name="Xu Q."/>
            <person name="Tunggal B."/>
            <person name="Kummerfeld S."/>
            <person name="Madera M."/>
            <person name="Konfortov B.A."/>
            <person name="Rivero F."/>
            <person name="Bankier A.T."/>
            <person name="Lehmann R."/>
            <person name="Hamlin N."/>
            <person name="Davies R."/>
            <person name="Gaudet P."/>
            <person name="Fey P."/>
            <person name="Pilcher K."/>
            <person name="Chen G."/>
            <person name="Saunders D."/>
            <person name="Sodergren E.J."/>
            <person name="Davis P."/>
            <person name="Kerhornou A."/>
            <person name="Nie X."/>
            <person name="Hall N."/>
            <person name="Anjard C."/>
            <person name="Hemphill L."/>
            <person name="Bason N."/>
            <person name="Farbrother P."/>
            <person name="Desany B."/>
            <person name="Just E."/>
            <person name="Morio T."/>
            <person name="Rost R."/>
            <person name="Churcher C.M."/>
            <person name="Cooper J."/>
            <person name="Haydock S."/>
            <person name="van Driessche N."/>
            <person name="Cronin A."/>
            <person name="Goodhead I."/>
            <person name="Muzny D.M."/>
            <person name="Mourier T."/>
            <person name="Pain A."/>
            <person name="Lu M."/>
            <person name="Harper D."/>
            <person name="Lindsay R."/>
            <person name="Hauser H."/>
            <person name="James K.D."/>
            <person name="Quiles M."/>
            <person name="Madan Babu M."/>
            <person name="Saito T."/>
            <person name="Buchrieser C."/>
            <person name="Wardroper A."/>
            <person name="Felder M."/>
            <person name="Thangavelu M."/>
            <person name="Johnson D."/>
            <person name="Knights A."/>
            <person name="Loulseged H."/>
            <person name="Mungall K.L."/>
            <person name="Oliver K."/>
            <person name="Price C."/>
            <person name="Quail M.A."/>
            <person name="Urushihara H."/>
            <person name="Hernandez J."/>
            <person name="Rabbinowitsch E."/>
            <person name="Steffen D."/>
            <person name="Sanders M."/>
            <person name="Ma J."/>
            <person name="Kohara Y."/>
            <person name="Sharp S."/>
            <person name="Simmonds M.N."/>
            <person name="Spiegler S."/>
            <person name="Tivey A."/>
            <person name="Sugano S."/>
            <person name="White B."/>
            <person name="Walker D."/>
            <person name="Woodward J.R."/>
            <person name="Winckler T."/>
            <person name="Tanaka Y."/>
            <person name="Shaulsky G."/>
            <person name="Schleicher M."/>
            <person name="Weinstock G.M."/>
            <person name="Rosenthal A."/>
            <person name="Cox E.C."/>
            <person name="Chisholm R.L."/>
            <person name="Gibbs R.A."/>
            <person name="Loomis W.F."/>
            <person name="Platzer M."/>
            <person name="Kay R.R."/>
            <person name="Williams J.G."/>
            <person name="Dear P.H."/>
            <person name="Noegel A.A."/>
            <person name="Barrell B.G."/>
            <person name="Kuspa A."/>
        </authorList>
    </citation>
    <scope>NUCLEOTIDE SEQUENCE [LARGE SCALE GENOMIC DNA]</scope>
    <source>
        <strain>AX4</strain>
    </source>
</reference>
<feature type="chain" id="PRO_0000329315" description="Probable protein phosphatase methylesterase 1">
    <location>
        <begin position="1"/>
        <end position="321"/>
    </location>
</feature>
<feature type="active site" evidence="1">
    <location>
        <position position="170"/>
    </location>
</feature>
<feature type="active site" evidence="1">
    <location>
        <position position="195"/>
    </location>
</feature>
<feature type="active site" evidence="1">
    <location>
        <position position="307"/>
    </location>
</feature>
<proteinExistence type="inferred from homology"/>
<organism>
    <name type="scientific">Dictyostelium discoideum</name>
    <name type="common">Social amoeba</name>
    <dbReference type="NCBI Taxonomy" id="44689"/>
    <lineage>
        <taxon>Eukaryota</taxon>
        <taxon>Amoebozoa</taxon>
        <taxon>Evosea</taxon>
        <taxon>Eumycetozoa</taxon>
        <taxon>Dictyostelia</taxon>
        <taxon>Dictyosteliales</taxon>
        <taxon>Dictyosteliaceae</taxon>
        <taxon>Dictyostelium</taxon>
    </lineage>
</organism>